<reference key="1">
    <citation type="submission" date="2007-05" db="EMBL/GenBank/DDBJ databases">
        <title>Complete sequence of Geobacter uraniireducens Rf4.</title>
        <authorList>
            <consortium name="US DOE Joint Genome Institute"/>
            <person name="Copeland A."/>
            <person name="Lucas S."/>
            <person name="Lapidus A."/>
            <person name="Barry K."/>
            <person name="Detter J.C."/>
            <person name="Glavina del Rio T."/>
            <person name="Hammon N."/>
            <person name="Israni S."/>
            <person name="Dalin E."/>
            <person name="Tice H."/>
            <person name="Pitluck S."/>
            <person name="Chertkov O."/>
            <person name="Brettin T."/>
            <person name="Bruce D."/>
            <person name="Han C."/>
            <person name="Schmutz J."/>
            <person name="Larimer F."/>
            <person name="Land M."/>
            <person name="Hauser L."/>
            <person name="Kyrpides N."/>
            <person name="Mikhailova N."/>
            <person name="Shelobolina E."/>
            <person name="Aklujkar M."/>
            <person name="Lovley D."/>
            <person name="Richardson P."/>
        </authorList>
    </citation>
    <scope>NUCLEOTIDE SEQUENCE [LARGE SCALE GENOMIC DNA]</scope>
    <source>
        <strain>ATCC BAA-1134 / JCM 13001 / Rf4</strain>
    </source>
</reference>
<accession>A5G9I2</accession>
<sequence length="549" mass="58531">MAKIIKFDQEGRNAFLKGVNTLADAVKVTLGPKGRNVVIEKSFGAPLITKDGVTVAKEIELDDKFENMGAQLVKEVASKTSDVAGDGTTTATVLAQAIYRQGAKLVAAGHNPMEIKRGIDKAVETLVAELKNISKPIKDHKEIAQVGTISANNDKTIGDIIAEAMEKVGKEGVITVEEAKAMETTLETVEGMQFDRGYLSPYFVTDPERMEATLENANILIHDKKISNMKDLLPVLEQTAKSGRPLIIIAEDIEGEALATLVVNKLRGVLNICAVKAPGFGDRRKAMLEDIAVLTGGKVISEEIGFKLENTTMDMLGQAKKITVDKDNTTIIDGAGSEAEIQGRVKMIRAQIEETTSDYDREKLQERLAKLVGGVAVIKVGAATEVEMKEKKARVEDALHATRAAVDEGIVPGGGVAYLRAMSALDSLDLSTEQQFGVNVIKRALEEPIRQIAQNAGVDGSIVVDKVKNGKDAFGYNAADDEYVDMIQAGIIDPTKVSRSALQNASSIAGLMLTTEAMIADKPKEEGSMPAMPGGMGGMGGMGGMGGMM</sequence>
<gene>
    <name evidence="1" type="primary">groEL</name>
    <name evidence="1" type="synonym">groL</name>
    <name type="ordered locus">Gura_4307</name>
</gene>
<keyword id="KW-0067">ATP-binding</keyword>
<keyword id="KW-0143">Chaperone</keyword>
<keyword id="KW-0963">Cytoplasm</keyword>
<keyword id="KW-0413">Isomerase</keyword>
<keyword id="KW-0547">Nucleotide-binding</keyword>
<keyword id="KW-1185">Reference proteome</keyword>
<organism>
    <name type="scientific">Geotalea uraniireducens (strain Rf4)</name>
    <name type="common">Geobacter uraniireducens</name>
    <dbReference type="NCBI Taxonomy" id="351605"/>
    <lineage>
        <taxon>Bacteria</taxon>
        <taxon>Pseudomonadati</taxon>
        <taxon>Thermodesulfobacteriota</taxon>
        <taxon>Desulfuromonadia</taxon>
        <taxon>Geobacterales</taxon>
        <taxon>Geobacteraceae</taxon>
        <taxon>Geotalea</taxon>
    </lineage>
</organism>
<comment type="function">
    <text evidence="1">Together with its co-chaperonin GroES, plays an essential role in assisting protein folding. The GroEL-GroES system forms a nano-cage that allows encapsulation of the non-native substrate proteins and provides a physical environment optimized to promote and accelerate protein folding.</text>
</comment>
<comment type="catalytic activity">
    <reaction evidence="1">
        <text>ATP + H2O + a folded polypeptide = ADP + phosphate + an unfolded polypeptide.</text>
        <dbReference type="EC" id="5.6.1.7"/>
    </reaction>
</comment>
<comment type="subunit">
    <text evidence="1">Forms a cylinder of 14 subunits composed of two heptameric rings stacked back-to-back. Interacts with the co-chaperonin GroES.</text>
</comment>
<comment type="subcellular location">
    <subcellularLocation>
        <location evidence="1">Cytoplasm</location>
    </subcellularLocation>
</comment>
<comment type="similarity">
    <text evidence="1">Belongs to the chaperonin (HSP60) family.</text>
</comment>
<proteinExistence type="inferred from homology"/>
<dbReference type="EC" id="5.6.1.7" evidence="1"/>
<dbReference type="EMBL" id="CP000698">
    <property type="protein sequence ID" value="ABQ28450.1"/>
    <property type="molecule type" value="Genomic_DNA"/>
</dbReference>
<dbReference type="RefSeq" id="WP_011941080.1">
    <property type="nucleotide sequence ID" value="NC_009483.1"/>
</dbReference>
<dbReference type="SMR" id="A5G9I2"/>
<dbReference type="STRING" id="351605.Gura_4307"/>
<dbReference type="KEGG" id="gur:Gura_4307"/>
<dbReference type="HOGENOM" id="CLU_016503_3_0_7"/>
<dbReference type="OrthoDB" id="9766614at2"/>
<dbReference type="Proteomes" id="UP000006695">
    <property type="component" value="Chromosome"/>
</dbReference>
<dbReference type="GO" id="GO:0005737">
    <property type="term" value="C:cytoplasm"/>
    <property type="evidence" value="ECO:0007669"/>
    <property type="project" value="UniProtKB-SubCell"/>
</dbReference>
<dbReference type="GO" id="GO:0005524">
    <property type="term" value="F:ATP binding"/>
    <property type="evidence" value="ECO:0007669"/>
    <property type="project" value="UniProtKB-UniRule"/>
</dbReference>
<dbReference type="GO" id="GO:0140662">
    <property type="term" value="F:ATP-dependent protein folding chaperone"/>
    <property type="evidence" value="ECO:0007669"/>
    <property type="project" value="InterPro"/>
</dbReference>
<dbReference type="GO" id="GO:0016853">
    <property type="term" value="F:isomerase activity"/>
    <property type="evidence" value="ECO:0007669"/>
    <property type="project" value="UniProtKB-KW"/>
</dbReference>
<dbReference type="GO" id="GO:0051082">
    <property type="term" value="F:unfolded protein binding"/>
    <property type="evidence" value="ECO:0007669"/>
    <property type="project" value="UniProtKB-UniRule"/>
</dbReference>
<dbReference type="GO" id="GO:0042026">
    <property type="term" value="P:protein refolding"/>
    <property type="evidence" value="ECO:0007669"/>
    <property type="project" value="UniProtKB-UniRule"/>
</dbReference>
<dbReference type="CDD" id="cd03344">
    <property type="entry name" value="GroEL"/>
    <property type="match status" value="1"/>
</dbReference>
<dbReference type="FunFam" id="1.10.560.10:FF:000001">
    <property type="entry name" value="60 kDa chaperonin"/>
    <property type="match status" value="1"/>
</dbReference>
<dbReference type="FunFam" id="3.50.7.10:FF:000001">
    <property type="entry name" value="60 kDa chaperonin"/>
    <property type="match status" value="1"/>
</dbReference>
<dbReference type="Gene3D" id="3.50.7.10">
    <property type="entry name" value="GroEL"/>
    <property type="match status" value="1"/>
</dbReference>
<dbReference type="Gene3D" id="1.10.560.10">
    <property type="entry name" value="GroEL-like equatorial domain"/>
    <property type="match status" value="1"/>
</dbReference>
<dbReference type="Gene3D" id="3.30.260.10">
    <property type="entry name" value="TCP-1-like chaperonin intermediate domain"/>
    <property type="match status" value="1"/>
</dbReference>
<dbReference type="HAMAP" id="MF_00600">
    <property type="entry name" value="CH60"/>
    <property type="match status" value="1"/>
</dbReference>
<dbReference type="InterPro" id="IPR018370">
    <property type="entry name" value="Chaperonin_Cpn60_CS"/>
</dbReference>
<dbReference type="InterPro" id="IPR001844">
    <property type="entry name" value="Cpn60/GroEL"/>
</dbReference>
<dbReference type="InterPro" id="IPR002423">
    <property type="entry name" value="Cpn60/GroEL/TCP-1"/>
</dbReference>
<dbReference type="InterPro" id="IPR027409">
    <property type="entry name" value="GroEL-like_apical_dom_sf"/>
</dbReference>
<dbReference type="InterPro" id="IPR027413">
    <property type="entry name" value="GROEL-like_equatorial_sf"/>
</dbReference>
<dbReference type="InterPro" id="IPR027410">
    <property type="entry name" value="TCP-1-like_intermed_sf"/>
</dbReference>
<dbReference type="NCBIfam" id="TIGR02348">
    <property type="entry name" value="GroEL"/>
    <property type="match status" value="1"/>
</dbReference>
<dbReference type="NCBIfam" id="NF000592">
    <property type="entry name" value="PRK00013.1"/>
    <property type="match status" value="1"/>
</dbReference>
<dbReference type="NCBIfam" id="NF009487">
    <property type="entry name" value="PRK12849.1"/>
    <property type="match status" value="1"/>
</dbReference>
<dbReference type="NCBIfam" id="NF009488">
    <property type="entry name" value="PRK12850.1"/>
    <property type="match status" value="1"/>
</dbReference>
<dbReference type="NCBIfam" id="NF009489">
    <property type="entry name" value="PRK12851.1"/>
    <property type="match status" value="1"/>
</dbReference>
<dbReference type="PANTHER" id="PTHR45633">
    <property type="entry name" value="60 KDA HEAT SHOCK PROTEIN, MITOCHONDRIAL"/>
    <property type="match status" value="1"/>
</dbReference>
<dbReference type="Pfam" id="PF00118">
    <property type="entry name" value="Cpn60_TCP1"/>
    <property type="match status" value="1"/>
</dbReference>
<dbReference type="PRINTS" id="PR00298">
    <property type="entry name" value="CHAPERONIN60"/>
</dbReference>
<dbReference type="SUPFAM" id="SSF52029">
    <property type="entry name" value="GroEL apical domain-like"/>
    <property type="match status" value="1"/>
</dbReference>
<dbReference type="SUPFAM" id="SSF48592">
    <property type="entry name" value="GroEL equatorial domain-like"/>
    <property type="match status" value="1"/>
</dbReference>
<dbReference type="SUPFAM" id="SSF54849">
    <property type="entry name" value="GroEL-intermediate domain like"/>
    <property type="match status" value="1"/>
</dbReference>
<dbReference type="PROSITE" id="PS00296">
    <property type="entry name" value="CHAPERONINS_CPN60"/>
    <property type="match status" value="1"/>
</dbReference>
<evidence type="ECO:0000255" key="1">
    <source>
        <dbReference type="HAMAP-Rule" id="MF_00600"/>
    </source>
</evidence>
<name>CH60_GEOUR</name>
<feature type="chain" id="PRO_0000332006" description="Chaperonin GroEL">
    <location>
        <begin position="1"/>
        <end position="549"/>
    </location>
</feature>
<feature type="binding site" evidence="1">
    <location>
        <begin position="29"/>
        <end position="32"/>
    </location>
    <ligand>
        <name>ATP</name>
        <dbReference type="ChEBI" id="CHEBI:30616"/>
    </ligand>
</feature>
<feature type="binding site" evidence="1">
    <location>
        <position position="50"/>
    </location>
    <ligand>
        <name>ATP</name>
        <dbReference type="ChEBI" id="CHEBI:30616"/>
    </ligand>
</feature>
<feature type="binding site" evidence="1">
    <location>
        <begin position="86"/>
        <end position="90"/>
    </location>
    <ligand>
        <name>ATP</name>
        <dbReference type="ChEBI" id="CHEBI:30616"/>
    </ligand>
</feature>
<feature type="binding site" evidence="1">
    <location>
        <position position="414"/>
    </location>
    <ligand>
        <name>ATP</name>
        <dbReference type="ChEBI" id="CHEBI:30616"/>
    </ligand>
</feature>
<feature type="binding site" evidence="1">
    <location>
        <begin position="477"/>
        <end position="479"/>
    </location>
    <ligand>
        <name>ATP</name>
        <dbReference type="ChEBI" id="CHEBI:30616"/>
    </ligand>
</feature>
<feature type="binding site" evidence="1">
    <location>
        <position position="493"/>
    </location>
    <ligand>
        <name>ATP</name>
        <dbReference type="ChEBI" id="CHEBI:30616"/>
    </ligand>
</feature>
<protein>
    <recommendedName>
        <fullName evidence="1">Chaperonin GroEL</fullName>
        <ecNumber evidence="1">5.6.1.7</ecNumber>
    </recommendedName>
    <alternativeName>
        <fullName evidence="1">60 kDa chaperonin</fullName>
    </alternativeName>
    <alternativeName>
        <fullName evidence="1">Chaperonin-60</fullName>
        <shortName evidence="1">Cpn60</shortName>
    </alternativeName>
</protein>